<dbReference type="EC" id="7.1.1.-" evidence="1"/>
<dbReference type="EMBL" id="CP000688">
    <property type="protein sequence ID" value="ABQ17391.1"/>
    <property type="molecule type" value="Genomic_DNA"/>
</dbReference>
<dbReference type="SMR" id="A5FQY4"/>
<dbReference type="KEGG" id="deb:DehaBAV1_0808"/>
<dbReference type="PATRIC" id="fig|216389.18.peg.857"/>
<dbReference type="HOGENOM" id="CLU_055737_7_3_0"/>
<dbReference type="GO" id="GO:0005886">
    <property type="term" value="C:plasma membrane"/>
    <property type="evidence" value="ECO:0007669"/>
    <property type="project" value="UniProtKB-SubCell"/>
</dbReference>
<dbReference type="GO" id="GO:0045271">
    <property type="term" value="C:respiratory chain complex I"/>
    <property type="evidence" value="ECO:0007669"/>
    <property type="project" value="TreeGrafter"/>
</dbReference>
<dbReference type="GO" id="GO:0051539">
    <property type="term" value="F:4 iron, 4 sulfur cluster binding"/>
    <property type="evidence" value="ECO:0007669"/>
    <property type="project" value="UniProtKB-KW"/>
</dbReference>
<dbReference type="GO" id="GO:0005506">
    <property type="term" value="F:iron ion binding"/>
    <property type="evidence" value="ECO:0007669"/>
    <property type="project" value="UniProtKB-UniRule"/>
</dbReference>
<dbReference type="GO" id="GO:0008137">
    <property type="term" value="F:NADH dehydrogenase (ubiquinone) activity"/>
    <property type="evidence" value="ECO:0007669"/>
    <property type="project" value="InterPro"/>
</dbReference>
<dbReference type="GO" id="GO:0050136">
    <property type="term" value="F:NADH:ubiquinone reductase (non-electrogenic) activity"/>
    <property type="evidence" value="ECO:0007669"/>
    <property type="project" value="UniProtKB-UniRule"/>
</dbReference>
<dbReference type="GO" id="GO:0048038">
    <property type="term" value="F:quinone binding"/>
    <property type="evidence" value="ECO:0007669"/>
    <property type="project" value="UniProtKB-KW"/>
</dbReference>
<dbReference type="GO" id="GO:0009060">
    <property type="term" value="P:aerobic respiration"/>
    <property type="evidence" value="ECO:0007669"/>
    <property type="project" value="TreeGrafter"/>
</dbReference>
<dbReference type="GO" id="GO:0015990">
    <property type="term" value="P:electron transport coupled proton transport"/>
    <property type="evidence" value="ECO:0007669"/>
    <property type="project" value="TreeGrafter"/>
</dbReference>
<dbReference type="FunFam" id="3.40.50.12280:FF:000002">
    <property type="entry name" value="NADH-quinone oxidoreductase subunit B"/>
    <property type="match status" value="1"/>
</dbReference>
<dbReference type="Gene3D" id="3.40.50.12280">
    <property type="match status" value="1"/>
</dbReference>
<dbReference type="HAMAP" id="MF_01356">
    <property type="entry name" value="NDH1_NuoB"/>
    <property type="match status" value="1"/>
</dbReference>
<dbReference type="InterPro" id="IPR006137">
    <property type="entry name" value="NADH_UbQ_OxRdtase-like_20kDa"/>
</dbReference>
<dbReference type="InterPro" id="IPR006138">
    <property type="entry name" value="NADH_UQ_OxRdtase_20Kd_su"/>
</dbReference>
<dbReference type="NCBIfam" id="TIGR01957">
    <property type="entry name" value="nuoB_fam"/>
    <property type="match status" value="1"/>
</dbReference>
<dbReference type="NCBIfam" id="NF005012">
    <property type="entry name" value="PRK06411.1"/>
    <property type="match status" value="1"/>
</dbReference>
<dbReference type="PANTHER" id="PTHR11995">
    <property type="entry name" value="NADH DEHYDROGENASE"/>
    <property type="match status" value="1"/>
</dbReference>
<dbReference type="PANTHER" id="PTHR11995:SF14">
    <property type="entry name" value="NADH DEHYDROGENASE [UBIQUINONE] IRON-SULFUR PROTEIN 7, MITOCHONDRIAL"/>
    <property type="match status" value="1"/>
</dbReference>
<dbReference type="Pfam" id="PF01058">
    <property type="entry name" value="Oxidored_q6"/>
    <property type="match status" value="1"/>
</dbReference>
<dbReference type="SUPFAM" id="SSF56770">
    <property type="entry name" value="HydA/Nqo6-like"/>
    <property type="match status" value="1"/>
</dbReference>
<reference key="1">
    <citation type="submission" date="2007-05" db="EMBL/GenBank/DDBJ databases">
        <title>Complete sequence of Dehalococcoides sp. BAV1.</title>
        <authorList>
            <consortium name="US DOE Joint Genome Institute"/>
            <person name="Copeland A."/>
            <person name="Lucas S."/>
            <person name="Lapidus A."/>
            <person name="Barry K."/>
            <person name="Detter J.C."/>
            <person name="Glavina del Rio T."/>
            <person name="Hammon N."/>
            <person name="Israni S."/>
            <person name="Pitluck S."/>
            <person name="Lowry S."/>
            <person name="Clum A."/>
            <person name="Schmutz J."/>
            <person name="Larimer F."/>
            <person name="Land M."/>
            <person name="Hauser L."/>
            <person name="Kyrpides N."/>
            <person name="Kim E."/>
            <person name="Ritalahti K.M."/>
            <person name="Loeffler F."/>
            <person name="Richardson P."/>
        </authorList>
    </citation>
    <scope>NUCLEOTIDE SEQUENCE [LARGE SCALE GENOMIC DNA]</scope>
    <source>
        <strain>ATCC BAA-2100 / JCM 16839 / KCTC 5957 / BAV1</strain>
    </source>
</reference>
<evidence type="ECO:0000255" key="1">
    <source>
        <dbReference type="HAMAP-Rule" id="MF_01356"/>
    </source>
</evidence>
<keyword id="KW-0004">4Fe-4S</keyword>
<keyword id="KW-1003">Cell membrane</keyword>
<keyword id="KW-0408">Iron</keyword>
<keyword id="KW-0411">Iron-sulfur</keyword>
<keyword id="KW-0472">Membrane</keyword>
<keyword id="KW-0479">Metal-binding</keyword>
<keyword id="KW-0520">NAD</keyword>
<keyword id="KW-0874">Quinone</keyword>
<keyword id="KW-1278">Translocase</keyword>
<keyword id="KW-0813">Transport</keyword>
<keyword id="KW-0830">Ubiquinone</keyword>
<protein>
    <recommendedName>
        <fullName evidence="1">NADH-quinone oxidoreductase subunit B</fullName>
        <ecNumber evidence="1">7.1.1.-</ecNumber>
    </recommendedName>
    <alternativeName>
        <fullName evidence="1">NADH dehydrogenase I subunit B</fullName>
    </alternativeName>
    <alternativeName>
        <fullName evidence="1">NDH-1 subunit B</fullName>
    </alternativeName>
</protein>
<proteinExistence type="inferred from homology"/>
<gene>
    <name evidence="1" type="primary">nuoB</name>
    <name type="ordered locus">DehaBAV1_0808</name>
</gene>
<feature type="chain" id="PRO_0000376192" description="NADH-quinone oxidoreductase subunit B">
    <location>
        <begin position="1"/>
        <end position="200"/>
    </location>
</feature>
<feature type="binding site" evidence="1">
    <location>
        <position position="78"/>
    </location>
    <ligand>
        <name>[4Fe-4S] cluster</name>
        <dbReference type="ChEBI" id="CHEBI:49883"/>
    </ligand>
</feature>
<feature type="binding site" evidence="1">
    <location>
        <position position="79"/>
    </location>
    <ligand>
        <name>[4Fe-4S] cluster</name>
        <dbReference type="ChEBI" id="CHEBI:49883"/>
    </ligand>
</feature>
<feature type="binding site" evidence="1">
    <location>
        <position position="144"/>
    </location>
    <ligand>
        <name>[4Fe-4S] cluster</name>
        <dbReference type="ChEBI" id="CHEBI:49883"/>
    </ligand>
</feature>
<feature type="binding site" evidence="1">
    <location>
        <position position="174"/>
    </location>
    <ligand>
        <name>[4Fe-4S] cluster</name>
        <dbReference type="ChEBI" id="CHEBI:49883"/>
    </ligand>
</feature>
<comment type="function">
    <text evidence="1">NDH-1 shuttles electrons from NADH, via FMN and iron-sulfur (Fe-S) centers, to quinones in the respiratory chain. The immediate electron acceptor for the enzyme in this species is believed to be ubiquinone. Couples the redox reaction to proton translocation (for every two electrons transferred, four hydrogen ions are translocated across the cytoplasmic membrane), and thus conserves the redox energy in a proton gradient.</text>
</comment>
<comment type="catalytic activity">
    <reaction evidence="1">
        <text>a quinone + NADH + 5 H(+)(in) = a quinol + NAD(+) + 4 H(+)(out)</text>
        <dbReference type="Rhea" id="RHEA:57888"/>
        <dbReference type="ChEBI" id="CHEBI:15378"/>
        <dbReference type="ChEBI" id="CHEBI:24646"/>
        <dbReference type="ChEBI" id="CHEBI:57540"/>
        <dbReference type="ChEBI" id="CHEBI:57945"/>
        <dbReference type="ChEBI" id="CHEBI:132124"/>
    </reaction>
</comment>
<comment type="cofactor">
    <cofactor evidence="1">
        <name>[4Fe-4S] cluster</name>
        <dbReference type="ChEBI" id="CHEBI:49883"/>
    </cofactor>
    <text evidence="1">Binds 1 [4Fe-4S] cluster.</text>
</comment>
<comment type="subunit">
    <text evidence="1">NDH-1 is composed of 14 different subunits. Subunits NuoB, C, D, E, F, and G constitute the peripheral sector of the complex.</text>
</comment>
<comment type="subcellular location">
    <subcellularLocation>
        <location evidence="1">Cell membrane</location>
        <topology evidence="1">Peripheral membrane protein</topology>
        <orientation evidence="1">Cytoplasmic side</orientation>
    </subcellularLocation>
</comment>
<comment type="similarity">
    <text evidence="1">Belongs to the complex I 20 kDa subunit family.</text>
</comment>
<organism>
    <name type="scientific">Dehalococcoides mccartyi (strain ATCC BAA-2100 / JCM 16839 / KCTC 5957 / BAV1)</name>
    <dbReference type="NCBI Taxonomy" id="216389"/>
    <lineage>
        <taxon>Bacteria</taxon>
        <taxon>Bacillati</taxon>
        <taxon>Chloroflexota</taxon>
        <taxon>Dehalococcoidia</taxon>
        <taxon>Dehalococcoidales</taxon>
        <taxon>Dehalococcoidaceae</taxon>
        <taxon>Dehalococcoides</taxon>
    </lineage>
</organism>
<accession>A5FQY4</accession>
<name>NUOB_DEHMB</name>
<sequence length="200" mass="22539">MELNFEKPLSLLTLDEIDQQEGGVIQSFRTGHTSPYPDPADWLNGEEPPPGVFITSVEKVLNWSRHYSLWPVMFGLACCAIEMMCMAASRWDLARFGMDIFRASPRQADLMIVAGTLTWKMAPWLKRIYDQMPEPKWVLAMGACGTSGGLFRDSYSVVPGFNLVVPVDVYVPGCPPRPEALMRAIMDIHEKIDKTCILKR</sequence>